<dbReference type="EMBL" id="M91252">
    <property type="protein sequence ID" value="AAA48538.1"/>
    <property type="molecule type" value="Genomic_DNA"/>
</dbReference>
<dbReference type="SMR" id="P28101"/>
<dbReference type="GlyCosmos" id="P28101">
    <property type="glycosylation" value="1 site, No reported glycans"/>
</dbReference>
<dbReference type="GO" id="GO:0005615">
    <property type="term" value="C:extracellular space"/>
    <property type="evidence" value="ECO:0000250"/>
    <property type="project" value="UniProtKB"/>
</dbReference>
<dbReference type="GO" id="GO:0005125">
    <property type="term" value="F:cytokine activity"/>
    <property type="evidence" value="ECO:0007669"/>
    <property type="project" value="TreeGrafter"/>
</dbReference>
<dbReference type="GO" id="GO:0005109">
    <property type="term" value="F:frizzled binding"/>
    <property type="evidence" value="ECO:0007669"/>
    <property type="project" value="TreeGrafter"/>
</dbReference>
<dbReference type="GO" id="GO:0060070">
    <property type="term" value="P:canonical Wnt signaling pathway"/>
    <property type="evidence" value="ECO:0000250"/>
    <property type="project" value="UniProtKB"/>
</dbReference>
<dbReference type="GO" id="GO:0045165">
    <property type="term" value="P:cell fate commitment"/>
    <property type="evidence" value="ECO:0007669"/>
    <property type="project" value="TreeGrafter"/>
</dbReference>
<dbReference type="GO" id="GO:0030182">
    <property type="term" value="P:neuron differentiation"/>
    <property type="evidence" value="ECO:0007669"/>
    <property type="project" value="TreeGrafter"/>
</dbReference>
<dbReference type="Gene3D" id="3.30.2460.20">
    <property type="match status" value="1"/>
</dbReference>
<dbReference type="InterPro" id="IPR005817">
    <property type="entry name" value="Wnt"/>
</dbReference>
<dbReference type="InterPro" id="IPR043158">
    <property type="entry name" value="Wnt_C"/>
</dbReference>
<dbReference type="PANTHER" id="PTHR12027:SF88">
    <property type="entry name" value="PROTEIN WNT-3A"/>
    <property type="match status" value="1"/>
</dbReference>
<dbReference type="PANTHER" id="PTHR12027">
    <property type="entry name" value="WNT RELATED"/>
    <property type="match status" value="1"/>
</dbReference>
<dbReference type="Pfam" id="PF00110">
    <property type="entry name" value="wnt"/>
    <property type="match status" value="1"/>
</dbReference>
<dbReference type="SMART" id="SM00097">
    <property type="entry name" value="WNT1"/>
    <property type="match status" value="1"/>
</dbReference>
<evidence type="ECO:0000250" key="1">
    <source>
        <dbReference type="UniProtKB" id="P27467"/>
    </source>
</evidence>
<evidence type="ECO:0000250" key="2">
    <source>
        <dbReference type="UniProtKB" id="P28026"/>
    </source>
</evidence>
<evidence type="ECO:0000250" key="3">
    <source>
        <dbReference type="UniProtKB" id="P56704"/>
    </source>
</evidence>
<evidence type="ECO:0000255" key="4"/>
<evidence type="ECO:0000305" key="5"/>
<name>WNT3A_ALOVU</name>
<keyword id="KW-0217">Developmental protein</keyword>
<keyword id="KW-1015">Disulfide bond</keyword>
<keyword id="KW-0272">Extracellular matrix</keyword>
<keyword id="KW-0325">Glycoprotein</keyword>
<keyword id="KW-0449">Lipoprotein</keyword>
<keyword id="KW-0964">Secreted</keyword>
<keyword id="KW-0879">Wnt signaling pathway</keyword>
<comment type="function">
    <text evidence="1 3">Ligand for members of the frizzled family of seven transmembrane receptors. Functions in the canonical Wnt signaling pathway that results in activation of transcription factors of the TCF/LEF family. Required for normal embryonic mesoderm development and formation of caudal somites. Required for normal morphogenesis of the developing neural tube.</text>
</comment>
<comment type="subcellular location">
    <subcellularLocation>
        <location evidence="1">Secreted</location>
        <location evidence="1">Extracellular space</location>
        <location evidence="1">Extracellular matrix</location>
    </subcellularLocation>
    <subcellularLocation>
        <location evidence="1">Secreted</location>
    </subcellularLocation>
</comment>
<comment type="PTM">
    <text evidence="1">Disulfide bonds have critical and distinct roles in secretion and activity. Loss of each conserved cysteine results in high molecular weight oxidized Wnt oligomers, which are formed through inter-Wnt disulfide bonding.</text>
</comment>
<comment type="PTM">
    <text evidence="1 3">Palmitoleoylation is required for efficient binding to frizzled receptors. Depalmitoleoylation leads to Wnt signaling pathway inhibition.</text>
</comment>
<comment type="similarity">
    <text evidence="5">Belongs to the Wnt family.</text>
</comment>
<accession>P28101</accession>
<protein>
    <recommendedName>
        <fullName>Protein Wnt-3a</fullName>
    </recommendedName>
</protein>
<reference key="1">
    <citation type="journal article" date="1992" name="Proc. Natl. Acad. Sci. U.S.A.">
        <title>Diversification of the Wnt gene family on the ancestral lineage of vertebrates.</title>
        <authorList>
            <person name="Sidow A."/>
        </authorList>
    </citation>
    <scope>NUCLEOTIDE SEQUENCE [GENOMIC DNA]</scope>
</reference>
<gene>
    <name type="primary">WNT-3A</name>
</gene>
<proteinExistence type="inferred from homology"/>
<organism>
    <name type="scientific">Alopias vulpinus</name>
    <name type="common">Common thresher shark</name>
    <name type="synonym">Squalus vulpinus</name>
    <dbReference type="NCBI Taxonomy" id="7852"/>
    <lineage>
        <taxon>Eukaryota</taxon>
        <taxon>Metazoa</taxon>
        <taxon>Chordata</taxon>
        <taxon>Craniata</taxon>
        <taxon>Vertebrata</taxon>
        <taxon>Chondrichthyes</taxon>
        <taxon>Elasmobranchii</taxon>
        <taxon>Galeomorphii</taxon>
        <taxon>Galeoidea</taxon>
        <taxon>Lamniformes</taxon>
        <taxon>Alopiidae</taxon>
        <taxon>Alopias</taxon>
    </lineage>
</organism>
<feature type="chain" id="PRO_0000200613" description="Protein Wnt-3a">
    <location>
        <begin position="1" status="less than"/>
        <end position="123" status="greater than"/>
    </location>
</feature>
<feature type="lipid moiety-binding region" description="O-palmitoleoyl serine" evidence="3">
    <location>
        <position position="1"/>
    </location>
</feature>
<feature type="glycosylation site" description="N-linked (GlcNAc...) asparagine" evidence="4">
    <location>
        <position position="90"/>
    </location>
</feature>
<feature type="disulfide bond" evidence="2">
    <location>
        <begin position="89"/>
        <end position="104"/>
    </location>
</feature>
<feature type="non-terminal residue">
    <location>
        <position position="1"/>
    </location>
</feature>
<feature type="non-terminal residue">
    <location>
        <position position="123"/>
    </location>
</feature>
<sequence length="123" mass="14162">SGSCEVKTCWWSQPDFRVVGDYLKDKYDSASEMIVEKHRESRGWVETLTPKYTSFKAPTERDLIYYDSSPNFCNPNPATGSFGTRHRKCNITSHGIDGCELLCCGRGHDTRTEKRREKCHCIF</sequence>